<keyword id="KW-0998">Cell outer membrane</keyword>
<keyword id="KW-0178">Competence</keyword>
<keyword id="KW-0449">Lipoprotein</keyword>
<keyword id="KW-0472">Membrane</keyword>
<keyword id="KW-0564">Palmitate</keyword>
<keyword id="KW-0732">Signal</keyword>
<dbReference type="EMBL" id="AL157959">
    <property type="protein sequence ID" value="CAM08139.1"/>
    <property type="molecule type" value="Genomic_DNA"/>
</dbReference>
<dbReference type="PIR" id="C81937">
    <property type="entry name" value="C81937"/>
</dbReference>
<dbReference type="RefSeq" id="WP_002221259.1">
    <property type="nucleotide sequence ID" value="NC_003116.1"/>
</dbReference>
<dbReference type="SMR" id="Q9JVB7"/>
<dbReference type="EnsemblBacteria" id="CAM08139">
    <property type="protein sequence ID" value="CAM08139"/>
    <property type="gene ID" value="NMA0907"/>
</dbReference>
<dbReference type="KEGG" id="nma:NMA0907"/>
<dbReference type="HOGENOM" id="CLU_065982_0_1_4"/>
<dbReference type="Proteomes" id="UP000000626">
    <property type="component" value="Chromosome"/>
</dbReference>
<dbReference type="GO" id="GO:1990063">
    <property type="term" value="C:Bam protein complex"/>
    <property type="evidence" value="ECO:0007669"/>
    <property type="project" value="TreeGrafter"/>
</dbReference>
<dbReference type="GO" id="GO:0030420">
    <property type="term" value="P:establishment of competence for transformation"/>
    <property type="evidence" value="ECO:0007669"/>
    <property type="project" value="UniProtKB-KW"/>
</dbReference>
<dbReference type="GO" id="GO:0043165">
    <property type="term" value="P:Gram-negative-bacterium-type cell outer membrane assembly"/>
    <property type="evidence" value="ECO:0007669"/>
    <property type="project" value="UniProtKB-UniRule"/>
</dbReference>
<dbReference type="GO" id="GO:0051205">
    <property type="term" value="P:protein insertion into membrane"/>
    <property type="evidence" value="ECO:0007669"/>
    <property type="project" value="UniProtKB-UniRule"/>
</dbReference>
<dbReference type="CDD" id="cd15830">
    <property type="entry name" value="BamD"/>
    <property type="match status" value="1"/>
</dbReference>
<dbReference type="FunFam" id="1.25.40.10:FF:000587">
    <property type="entry name" value="Outer membrane protein assembly factor BamD"/>
    <property type="match status" value="1"/>
</dbReference>
<dbReference type="Gene3D" id="1.25.40.10">
    <property type="entry name" value="Tetratricopeptide repeat domain"/>
    <property type="match status" value="1"/>
</dbReference>
<dbReference type="HAMAP" id="MF_00922">
    <property type="entry name" value="OM_assembly_BamD"/>
    <property type="match status" value="1"/>
</dbReference>
<dbReference type="InterPro" id="IPR017689">
    <property type="entry name" value="BamD"/>
</dbReference>
<dbReference type="InterPro" id="IPR039565">
    <property type="entry name" value="BamD-like"/>
</dbReference>
<dbReference type="InterPro" id="IPR011990">
    <property type="entry name" value="TPR-like_helical_dom_sf"/>
</dbReference>
<dbReference type="NCBIfam" id="TIGR03302">
    <property type="entry name" value="OM_YfiO"/>
    <property type="match status" value="1"/>
</dbReference>
<dbReference type="PANTHER" id="PTHR37423:SF1">
    <property type="entry name" value="OUTER MEMBRANE PROTEIN ASSEMBLY FACTOR BAMD"/>
    <property type="match status" value="1"/>
</dbReference>
<dbReference type="PANTHER" id="PTHR37423">
    <property type="entry name" value="SOLUBLE LYTIC MUREIN TRANSGLYCOSYLASE-RELATED"/>
    <property type="match status" value="1"/>
</dbReference>
<dbReference type="Pfam" id="PF13525">
    <property type="entry name" value="YfiO"/>
    <property type="match status" value="1"/>
</dbReference>
<dbReference type="SUPFAM" id="SSF48452">
    <property type="entry name" value="TPR-like"/>
    <property type="match status" value="1"/>
</dbReference>
<dbReference type="PROSITE" id="PS51257">
    <property type="entry name" value="PROKAR_LIPOPROTEIN"/>
    <property type="match status" value="1"/>
</dbReference>
<accession>Q9JVB7</accession>
<accession>A1IQV5</accession>
<reference key="1">
    <citation type="journal article" date="2000" name="Nature">
        <title>Complete DNA sequence of a serogroup A strain of Neisseria meningitidis Z2491.</title>
        <authorList>
            <person name="Parkhill J."/>
            <person name="Achtman M."/>
            <person name="James K.D."/>
            <person name="Bentley S.D."/>
            <person name="Churcher C.M."/>
            <person name="Klee S.R."/>
            <person name="Morelli G."/>
            <person name="Basham D."/>
            <person name="Brown D."/>
            <person name="Chillingworth T."/>
            <person name="Davies R.M."/>
            <person name="Davis P."/>
            <person name="Devlin K."/>
            <person name="Feltwell T."/>
            <person name="Hamlin N."/>
            <person name="Holroyd S."/>
            <person name="Jagels K."/>
            <person name="Leather S."/>
            <person name="Moule S."/>
            <person name="Mungall K.L."/>
            <person name="Quail M.A."/>
            <person name="Rajandream M.A."/>
            <person name="Rutherford K.M."/>
            <person name="Simmonds M."/>
            <person name="Skelton J."/>
            <person name="Whitehead S."/>
            <person name="Spratt B.G."/>
            <person name="Barrell B.G."/>
        </authorList>
    </citation>
    <scope>NUCLEOTIDE SEQUENCE [LARGE SCALE GENOMIC DNA]</scope>
    <source>
        <strain>DSM 15465 / Z2491</strain>
    </source>
</reference>
<proteinExistence type="inferred from homology"/>
<gene>
    <name evidence="1" type="primary">bamD</name>
    <name type="synonym">comL</name>
    <name type="ordered locus">NMA0907</name>
</gene>
<sequence>MKKILLTVSLGLALSACATQGTVDKDAQITQDWSVEKLYAEAQDELNSSNYTRAVKLYEILESRFPTSRHARQSQLDTAYAYYKDDEKDKALAAIERFRRLHPQHPNMDYALYLRGLVLFNEDQSFLNKLASQDWSDRDPKANREAYQAFAELVQRFPNSKYAADATARMVKLVDALGGNEMSVARYYMKRGAYIAAANRAQKIIGSYQNTRYVEESLAILELAYQKLGKPQLAADTRRVLETNFPKSPFLTHAWQPDDMPWWRYWH</sequence>
<evidence type="ECO:0000255" key="1">
    <source>
        <dbReference type="HAMAP-Rule" id="MF_00922"/>
    </source>
</evidence>
<feature type="signal peptide" evidence="1">
    <location>
        <begin position="1"/>
        <end position="16"/>
    </location>
</feature>
<feature type="chain" id="PRO_0000036222" description="Outer membrane protein assembly factor BamD">
    <location>
        <begin position="17"/>
        <end position="267"/>
    </location>
</feature>
<feature type="lipid moiety-binding region" description="N-palmitoyl cysteine" evidence="1">
    <location>
        <position position="17"/>
    </location>
</feature>
<feature type="lipid moiety-binding region" description="S-diacylglycerol cysteine" evidence="1">
    <location>
        <position position="17"/>
    </location>
</feature>
<name>BAMD_NEIMA</name>
<organism>
    <name type="scientific">Neisseria meningitidis serogroup A / serotype 4A (strain DSM 15465 / Z2491)</name>
    <dbReference type="NCBI Taxonomy" id="122587"/>
    <lineage>
        <taxon>Bacteria</taxon>
        <taxon>Pseudomonadati</taxon>
        <taxon>Pseudomonadota</taxon>
        <taxon>Betaproteobacteria</taxon>
        <taxon>Neisseriales</taxon>
        <taxon>Neisseriaceae</taxon>
        <taxon>Neisseria</taxon>
    </lineage>
</organism>
<comment type="function">
    <text evidence="1">Part of the outer membrane protein assembly complex, which is involved in assembly and insertion of beta-barrel proteins into the outer membrane. Required for efficient transformation of Neisseria meningitidis by species-related DNA.</text>
</comment>
<comment type="subunit">
    <text evidence="1">Part of the Bam complex.</text>
</comment>
<comment type="subcellular location">
    <subcellularLocation>
        <location evidence="1">Cell outer membrane</location>
        <topology evidence="1">Lipid-anchor</topology>
    </subcellularLocation>
</comment>
<comment type="similarity">
    <text evidence="1">Belongs to the BamD family.</text>
</comment>
<protein>
    <recommendedName>
        <fullName evidence="1">Outer membrane protein assembly factor BamD</fullName>
    </recommendedName>
    <alternativeName>
        <fullName>Competence lipoprotein ComL</fullName>
    </alternativeName>
</protein>